<comment type="function">
    <text evidence="1">F(1)F(0) ATP synthase produces ATP from ADP in the presence of a proton or sodium gradient. F-type ATPases consist of two structural domains, F(1) containing the extramembraneous catalytic core and F(0) containing the membrane proton channel, linked together by a central stalk and a peripheral stalk. During catalysis, ATP synthesis in the catalytic domain of F(1) is coupled via a rotary mechanism of the central stalk subunits to proton translocation.</text>
</comment>
<comment type="function">
    <text evidence="1">Key component of the F(0) channel; it plays a direct role in translocation across the membrane. A homomeric c-ring of between 10-14 subunits forms the central stalk rotor element with the F(1) delta and epsilon subunits.</text>
</comment>
<comment type="subunit">
    <text evidence="1">F-type ATPases have 2 components, F(1) - the catalytic core - and F(0) - the membrane proton channel. F(1) has five subunits: alpha(3), beta(3), gamma(1), delta(1), epsilon(1). F(0) has three main subunits: a(1), b(2) and c(10-14). The alpha and beta chains form an alternating ring which encloses part of the gamma chain. F(1) is attached to F(0) by a central stalk formed by the gamma and epsilon chains, while a peripheral stalk is formed by the delta and b chains.</text>
</comment>
<comment type="subcellular location">
    <subcellularLocation>
        <location evidence="1">Cell membrane</location>
        <topology evidence="1">Multi-pass membrane protein</topology>
    </subcellularLocation>
</comment>
<comment type="similarity">
    <text evidence="1">Belongs to the ATPase C chain family.</text>
</comment>
<sequence length="70" mass="7125">MELIATAIIIGLGALGAGIGNGLIVNGTVLGQARQPELKNELRQTMFIGIGLVEALPIIGVAVGFLLLNS</sequence>
<organism>
    <name type="scientific">Exiguobacterium sibiricum (strain DSM 17290 / CCUG 55495 / CIP 109462 / JCM 13490 / 255-15)</name>
    <dbReference type="NCBI Taxonomy" id="262543"/>
    <lineage>
        <taxon>Bacteria</taxon>
        <taxon>Bacillati</taxon>
        <taxon>Bacillota</taxon>
        <taxon>Bacilli</taxon>
        <taxon>Bacillales</taxon>
        <taxon>Bacillales Family XII. Incertae Sedis</taxon>
        <taxon>Exiguobacterium</taxon>
    </lineage>
</organism>
<feature type="chain" id="PRO_1000184381" description="ATP synthase subunit c">
    <location>
        <begin position="1"/>
        <end position="70"/>
    </location>
</feature>
<feature type="transmembrane region" description="Helical" evidence="1">
    <location>
        <begin position="4"/>
        <end position="24"/>
    </location>
</feature>
<feature type="transmembrane region" description="Helical" evidence="1">
    <location>
        <begin position="47"/>
        <end position="67"/>
    </location>
</feature>
<feature type="site" description="Reversibly protonated during proton transport" evidence="1">
    <location>
        <position position="54"/>
    </location>
</feature>
<protein>
    <recommendedName>
        <fullName evidence="1">ATP synthase subunit c</fullName>
    </recommendedName>
    <alternativeName>
        <fullName evidence="1">ATP synthase F(0) sector subunit c</fullName>
    </alternativeName>
    <alternativeName>
        <fullName evidence="1">F-type ATPase subunit c</fullName>
        <shortName evidence="1">F-ATPase subunit c</shortName>
    </alternativeName>
    <alternativeName>
        <fullName evidence="1">Lipid-binding protein</fullName>
    </alternativeName>
</protein>
<accession>B1YEG1</accession>
<reference key="1">
    <citation type="submission" date="2008-04" db="EMBL/GenBank/DDBJ databases">
        <title>Complete sequence of chromosome of Exiguobacterium sibiricum 255-15.</title>
        <authorList>
            <consortium name="US DOE Joint Genome Institute"/>
            <person name="Copeland A."/>
            <person name="Lucas S."/>
            <person name="Lapidus A."/>
            <person name="Glavina del Rio T."/>
            <person name="Dalin E."/>
            <person name="Tice H."/>
            <person name="Bruce D."/>
            <person name="Goodwin L."/>
            <person name="Pitluck S."/>
            <person name="Kiss H."/>
            <person name="Chertkov O."/>
            <person name="Monk C."/>
            <person name="Brettin T."/>
            <person name="Detter J.C."/>
            <person name="Han C."/>
            <person name="Kuske C.R."/>
            <person name="Schmutz J."/>
            <person name="Larimer F."/>
            <person name="Land M."/>
            <person name="Hauser L."/>
            <person name="Kyrpides N."/>
            <person name="Mikhailova N."/>
            <person name="Vishnivetskaya T."/>
            <person name="Rodrigues D.F."/>
            <person name="Gilichinsky D."/>
            <person name="Tiedje J."/>
            <person name="Richardson P."/>
        </authorList>
    </citation>
    <scope>NUCLEOTIDE SEQUENCE [LARGE SCALE GENOMIC DNA]</scope>
    <source>
        <strain>DSM 17290 / CCUG 55495 / CIP 109462 / JCM 13490 / 255-15</strain>
    </source>
</reference>
<keyword id="KW-0066">ATP synthesis</keyword>
<keyword id="KW-1003">Cell membrane</keyword>
<keyword id="KW-0138">CF(0)</keyword>
<keyword id="KW-0375">Hydrogen ion transport</keyword>
<keyword id="KW-0406">Ion transport</keyword>
<keyword id="KW-0446">Lipid-binding</keyword>
<keyword id="KW-0472">Membrane</keyword>
<keyword id="KW-1185">Reference proteome</keyword>
<keyword id="KW-0812">Transmembrane</keyword>
<keyword id="KW-1133">Transmembrane helix</keyword>
<keyword id="KW-0813">Transport</keyword>
<name>ATPL_EXIS2</name>
<proteinExistence type="inferred from homology"/>
<dbReference type="EMBL" id="CP001022">
    <property type="protein sequence ID" value="ACB62129.1"/>
    <property type="molecule type" value="Genomic_DNA"/>
</dbReference>
<dbReference type="RefSeq" id="WP_012371545.1">
    <property type="nucleotide sequence ID" value="NC_010556.1"/>
</dbReference>
<dbReference type="SMR" id="B1YEG1"/>
<dbReference type="STRING" id="262543.Exig_2681"/>
<dbReference type="KEGG" id="esi:Exig_2681"/>
<dbReference type="eggNOG" id="COG0636">
    <property type="taxonomic scope" value="Bacteria"/>
</dbReference>
<dbReference type="HOGENOM" id="CLU_148047_1_1_9"/>
<dbReference type="OrthoDB" id="2357540at2"/>
<dbReference type="Proteomes" id="UP000001681">
    <property type="component" value="Chromosome"/>
</dbReference>
<dbReference type="GO" id="GO:0005886">
    <property type="term" value="C:plasma membrane"/>
    <property type="evidence" value="ECO:0007669"/>
    <property type="project" value="UniProtKB-SubCell"/>
</dbReference>
<dbReference type="GO" id="GO:0045259">
    <property type="term" value="C:proton-transporting ATP synthase complex"/>
    <property type="evidence" value="ECO:0007669"/>
    <property type="project" value="UniProtKB-KW"/>
</dbReference>
<dbReference type="GO" id="GO:0033177">
    <property type="term" value="C:proton-transporting two-sector ATPase complex, proton-transporting domain"/>
    <property type="evidence" value="ECO:0007669"/>
    <property type="project" value="InterPro"/>
</dbReference>
<dbReference type="GO" id="GO:0008289">
    <property type="term" value="F:lipid binding"/>
    <property type="evidence" value="ECO:0007669"/>
    <property type="project" value="UniProtKB-KW"/>
</dbReference>
<dbReference type="GO" id="GO:0046933">
    <property type="term" value="F:proton-transporting ATP synthase activity, rotational mechanism"/>
    <property type="evidence" value="ECO:0007669"/>
    <property type="project" value="UniProtKB-UniRule"/>
</dbReference>
<dbReference type="CDD" id="cd18185">
    <property type="entry name" value="ATP-synt_Fo_c_ATPE"/>
    <property type="match status" value="1"/>
</dbReference>
<dbReference type="FunFam" id="1.20.20.10:FF:000004">
    <property type="entry name" value="ATP synthase subunit c"/>
    <property type="match status" value="1"/>
</dbReference>
<dbReference type="Gene3D" id="1.20.20.10">
    <property type="entry name" value="F1F0 ATP synthase subunit C"/>
    <property type="match status" value="1"/>
</dbReference>
<dbReference type="HAMAP" id="MF_01396">
    <property type="entry name" value="ATP_synth_c_bact"/>
    <property type="match status" value="1"/>
</dbReference>
<dbReference type="InterPro" id="IPR005953">
    <property type="entry name" value="ATP_synth_csu_bac/chlpt"/>
</dbReference>
<dbReference type="InterPro" id="IPR000454">
    <property type="entry name" value="ATP_synth_F0_csu"/>
</dbReference>
<dbReference type="InterPro" id="IPR020537">
    <property type="entry name" value="ATP_synth_F0_csu_DDCD_BS"/>
</dbReference>
<dbReference type="InterPro" id="IPR038662">
    <property type="entry name" value="ATP_synth_F0_csu_sf"/>
</dbReference>
<dbReference type="InterPro" id="IPR002379">
    <property type="entry name" value="ATPase_proteolipid_c-like_dom"/>
</dbReference>
<dbReference type="InterPro" id="IPR035921">
    <property type="entry name" value="F/V-ATP_Csub_sf"/>
</dbReference>
<dbReference type="NCBIfam" id="TIGR01260">
    <property type="entry name" value="ATP_synt_c"/>
    <property type="match status" value="1"/>
</dbReference>
<dbReference type="NCBIfam" id="NF005363">
    <property type="entry name" value="PRK06876.1"/>
    <property type="match status" value="1"/>
</dbReference>
<dbReference type="Pfam" id="PF00137">
    <property type="entry name" value="ATP-synt_C"/>
    <property type="match status" value="1"/>
</dbReference>
<dbReference type="PRINTS" id="PR00124">
    <property type="entry name" value="ATPASEC"/>
</dbReference>
<dbReference type="SUPFAM" id="SSF81333">
    <property type="entry name" value="F1F0 ATP synthase subunit C"/>
    <property type="match status" value="1"/>
</dbReference>
<dbReference type="PROSITE" id="PS00605">
    <property type="entry name" value="ATPASE_C"/>
    <property type="match status" value="1"/>
</dbReference>
<evidence type="ECO:0000255" key="1">
    <source>
        <dbReference type="HAMAP-Rule" id="MF_01396"/>
    </source>
</evidence>
<gene>
    <name evidence="1" type="primary">atpE</name>
    <name type="ordered locus">Exig_2681</name>
</gene>